<evidence type="ECO:0000255" key="1"/>
<evidence type="ECO:0000269" key="2">
    <source>
    </source>
</evidence>
<evidence type="ECO:0000305" key="3"/>
<protein>
    <recommendedName>
        <fullName>Uroplakin-1b</fullName>
        <shortName>UP1b</shortName>
    </recommendedName>
    <alternativeName>
        <fullName>Uroplakin Ib</fullName>
        <shortName>UPIb</shortName>
    </alternativeName>
</protein>
<gene>
    <name type="primary">UPK1B</name>
</gene>
<accession>P38573</accession>
<accession>Q1LZG4</accession>
<organism>
    <name type="scientific">Bos taurus</name>
    <name type="common">Bovine</name>
    <dbReference type="NCBI Taxonomy" id="9913"/>
    <lineage>
        <taxon>Eukaryota</taxon>
        <taxon>Metazoa</taxon>
        <taxon>Chordata</taxon>
        <taxon>Craniata</taxon>
        <taxon>Vertebrata</taxon>
        <taxon>Euteleostomi</taxon>
        <taxon>Mammalia</taxon>
        <taxon>Eutheria</taxon>
        <taxon>Laurasiatheria</taxon>
        <taxon>Artiodactyla</taxon>
        <taxon>Ruminantia</taxon>
        <taxon>Pecora</taxon>
        <taxon>Bovidae</taxon>
        <taxon>Bovinae</taxon>
        <taxon>Bos</taxon>
    </lineage>
</organism>
<dbReference type="EMBL" id="Z29378">
    <property type="protein sequence ID" value="CAA82569.1"/>
    <property type="molecule type" value="mRNA"/>
</dbReference>
<dbReference type="EMBL" id="BC116014">
    <property type="protein sequence ID" value="AAI16015.1"/>
    <property type="molecule type" value="mRNA"/>
</dbReference>
<dbReference type="PIR" id="I46081">
    <property type="entry name" value="I46081"/>
</dbReference>
<dbReference type="RefSeq" id="NP_776907.2">
    <property type="nucleotide sequence ID" value="NM_174482.2"/>
</dbReference>
<dbReference type="RefSeq" id="XP_005201318.1">
    <property type="nucleotide sequence ID" value="XM_005201261.3"/>
</dbReference>
<dbReference type="RefSeq" id="XP_010799373.1">
    <property type="nucleotide sequence ID" value="XM_010801071.2"/>
</dbReference>
<dbReference type="SMR" id="P38573"/>
<dbReference type="FunCoup" id="P38573">
    <property type="interactions" value="10"/>
</dbReference>
<dbReference type="STRING" id="9913.ENSBTAP00000011866"/>
<dbReference type="PaxDb" id="9913-ENSBTAP00000011866"/>
<dbReference type="GeneID" id="282113"/>
<dbReference type="KEGG" id="bta:282113"/>
<dbReference type="CTD" id="7348"/>
<dbReference type="eggNOG" id="KOG3882">
    <property type="taxonomic scope" value="Eukaryota"/>
</dbReference>
<dbReference type="HOGENOM" id="CLU_088971_1_0_1"/>
<dbReference type="InParanoid" id="P38573"/>
<dbReference type="OrthoDB" id="5982705at2759"/>
<dbReference type="TreeFam" id="TF335659"/>
<dbReference type="Proteomes" id="UP000009136">
    <property type="component" value="Unplaced"/>
</dbReference>
<dbReference type="GO" id="GO:0120001">
    <property type="term" value="C:apical plasma membrane urothelial plaque"/>
    <property type="evidence" value="ECO:0000314"/>
    <property type="project" value="UniProtKB"/>
</dbReference>
<dbReference type="GO" id="GO:0005783">
    <property type="term" value="C:endoplasmic reticulum"/>
    <property type="evidence" value="ECO:0000314"/>
    <property type="project" value="UniProtKB"/>
</dbReference>
<dbReference type="GO" id="GO:0016020">
    <property type="term" value="C:membrane"/>
    <property type="evidence" value="ECO:0000314"/>
    <property type="project" value="UniProtKB"/>
</dbReference>
<dbReference type="GO" id="GO:0005886">
    <property type="term" value="C:plasma membrane"/>
    <property type="evidence" value="ECO:0000314"/>
    <property type="project" value="UniProtKB"/>
</dbReference>
<dbReference type="GO" id="GO:0032991">
    <property type="term" value="C:protein-containing complex"/>
    <property type="evidence" value="ECO:0000314"/>
    <property type="project" value="UniProtKB"/>
</dbReference>
<dbReference type="GO" id="GO:0005198">
    <property type="term" value="F:structural molecule activity"/>
    <property type="evidence" value="ECO:0000314"/>
    <property type="project" value="UniProtKB"/>
</dbReference>
<dbReference type="GO" id="GO:0034394">
    <property type="term" value="P:protein localization to cell surface"/>
    <property type="evidence" value="ECO:0000353"/>
    <property type="project" value="UniProtKB"/>
</dbReference>
<dbReference type="CDD" id="cd03156">
    <property type="entry name" value="uroplakin_I_like_LEL"/>
    <property type="match status" value="1"/>
</dbReference>
<dbReference type="FunFam" id="1.10.1450.10:FF:000014">
    <property type="entry name" value="Tetraspanin"/>
    <property type="match status" value="1"/>
</dbReference>
<dbReference type="Gene3D" id="1.10.1450.10">
    <property type="entry name" value="Tetraspanin"/>
    <property type="match status" value="1"/>
</dbReference>
<dbReference type="InterPro" id="IPR018499">
    <property type="entry name" value="Tetraspanin/Peripherin"/>
</dbReference>
<dbReference type="InterPro" id="IPR000301">
    <property type="entry name" value="Tetraspanin_animals"/>
</dbReference>
<dbReference type="InterPro" id="IPR008952">
    <property type="entry name" value="Tetraspanin_EC2_sf"/>
</dbReference>
<dbReference type="PANTHER" id="PTHR47110">
    <property type="entry name" value="TESTIS-SPECIFIC EXPRESSED PROTEIN 55"/>
    <property type="match status" value="1"/>
</dbReference>
<dbReference type="PANTHER" id="PTHR47110:SF2">
    <property type="entry name" value="UROPLAKIN-1B"/>
    <property type="match status" value="1"/>
</dbReference>
<dbReference type="Pfam" id="PF00335">
    <property type="entry name" value="Tetraspanin"/>
    <property type="match status" value="1"/>
</dbReference>
<dbReference type="PIRSF" id="PIRSF002419">
    <property type="entry name" value="Tetraspanin"/>
    <property type="match status" value="1"/>
</dbReference>
<dbReference type="PRINTS" id="PR00259">
    <property type="entry name" value="TMFOUR"/>
</dbReference>
<dbReference type="SUPFAM" id="SSF48652">
    <property type="entry name" value="Tetraspanin"/>
    <property type="match status" value="1"/>
</dbReference>
<keyword id="KW-0903">Direct protein sequencing</keyword>
<keyword id="KW-0325">Glycoprotein</keyword>
<keyword id="KW-0472">Membrane</keyword>
<keyword id="KW-1185">Reference proteome</keyword>
<keyword id="KW-0812">Transmembrane</keyword>
<keyword id="KW-1133">Transmembrane helix</keyword>
<name>UPK1B_BOVIN</name>
<sequence>MAKDDSTVRCFQGLLIFGNVIIGMCSIALMAECIFFVSDQNSLYPLLEATNNDDIYAAAWIGMFVGICLFCLSVLGIVGIMKSNRKILLVYFILMFIVYAFEVASCITAATQRDFFTPNLFLKQMLERYQNNSPPNNDDQWKNNGVTKTWDRLMLQDNCCGVNGPSDWQKYTSAFRTENSDADYPWPRQCCVMNSLKEPLNLDACKLGVPGYYHSQGCYELISGPMNRHAWGVAWFGFAILCWTFWVLLGTMFYWSRIDY</sequence>
<comment type="function">
    <text>Component of the asymmetric unit membrane (AUM); a highly specialized biomembrane elaborated by terminally differentiated urothelial cells. May play an important role in normal bladder epithelial physiology, possibly in regulating membrane permeability of superficial umbrella cells or in stabilizing the apical membrane through AUM/cytoskeletal interactions.</text>
</comment>
<comment type="subunit">
    <text>Heterodimer with uroplakin-3A (UPK3A) or uroplakin-3B (UPK3B).</text>
</comment>
<comment type="subcellular location">
    <subcellularLocation>
        <location>Membrane</location>
        <topology>Multi-pass membrane protein</topology>
    </subcellularLocation>
</comment>
<comment type="tissue specificity">
    <text>Bladder epithelium.</text>
</comment>
<comment type="PTM">
    <text>N-glycosylated with high-mannose oligosaccharides.</text>
</comment>
<comment type="similarity">
    <text evidence="3">Belongs to the tetraspanin (TM4SF) family.</text>
</comment>
<feature type="initiator methionine" description="Removed" evidence="2">
    <location>
        <position position="1"/>
    </location>
</feature>
<feature type="chain" id="PRO_0000219288" description="Uroplakin-1b">
    <location>
        <begin position="2"/>
        <end position="260"/>
    </location>
</feature>
<feature type="topological domain" description="Cytoplasmic" evidence="1">
    <location>
        <begin position="2"/>
        <end position="15"/>
    </location>
</feature>
<feature type="transmembrane region" description="Helical" evidence="1">
    <location>
        <begin position="16"/>
        <end position="36"/>
    </location>
</feature>
<feature type="topological domain" description="Extracellular" evidence="1">
    <location>
        <begin position="37"/>
        <end position="60"/>
    </location>
</feature>
<feature type="transmembrane region" description="Helical" evidence="1">
    <location>
        <begin position="61"/>
        <end position="81"/>
    </location>
</feature>
<feature type="topological domain" description="Cytoplasmic" evidence="1">
    <location>
        <begin position="82"/>
        <end position="86"/>
    </location>
</feature>
<feature type="transmembrane region" description="Helical" evidence="1">
    <location>
        <begin position="87"/>
        <end position="107"/>
    </location>
</feature>
<feature type="topological domain" description="Extracellular" evidence="1">
    <location>
        <begin position="108"/>
        <end position="229"/>
    </location>
</feature>
<feature type="transmembrane region" description="Helical" evidence="1">
    <location>
        <begin position="230"/>
        <end position="250"/>
    </location>
</feature>
<feature type="topological domain" description="Cytoplasmic" evidence="1">
    <location>
        <begin position="251"/>
        <end position="260"/>
    </location>
</feature>
<feature type="sequence conflict" description="In Ref. 1; CAA82569." evidence="3" ref="1">
    <original>F</original>
    <variation>S</variation>
    <location>
        <position position="64"/>
    </location>
</feature>
<feature type="sequence conflict" description="In Ref. 1; CAA82569." evidence="3" ref="1">
    <original>Q</original>
    <variation>H</variation>
    <location>
        <position position="216"/>
    </location>
</feature>
<proteinExistence type="evidence at protein level"/>
<reference key="1">
    <citation type="journal article" date="1994" name="J. Cell Biol.">
        <title>Uroplakins Ia and Ib, two major differentiation products of bladder epithelium, belong to a family of four transmembrane domain (4TM) proteins.</title>
        <authorList>
            <person name="Yu J."/>
            <person name="Lin J.-H."/>
            <person name="Wu X.-R."/>
            <person name="Sun T.-T."/>
        </authorList>
    </citation>
    <scope>NUCLEOTIDE SEQUENCE [MRNA]</scope>
    <scope>PROTEIN SEQUENCE OF 2-21</scope>
    <source>
        <tissue>Urinary bladder urothelium</tissue>
    </source>
</reference>
<reference key="2">
    <citation type="submission" date="2006-05" db="EMBL/GenBank/DDBJ databases">
        <authorList>
            <consortium name="NIH - Mammalian Gene Collection (MGC) project"/>
        </authorList>
    </citation>
    <scope>NUCLEOTIDE SEQUENCE [LARGE SCALE MRNA]</scope>
    <source>
        <strain>Hereford</strain>
        <tissue>Ascending colon</tissue>
    </source>
</reference>
<reference key="3">
    <citation type="journal article" date="2002" name="J. Cell Biol.">
        <title>Uroplakin IIIb, a urothelial differentiation marker, dimerizes with uroplakin Ib as an early step of urothelial plaque assembly.</title>
        <authorList>
            <person name="Deng F.-M."/>
            <person name="Liang F.-X."/>
            <person name="Tu L."/>
            <person name="Resing K.A."/>
            <person name="Hu P."/>
            <person name="Supino M."/>
            <person name="Hu C.-C.A."/>
            <person name="Zhou G."/>
            <person name="Ding M."/>
            <person name="Kreibich G."/>
            <person name="Sun T.-T."/>
        </authorList>
    </citation>
    <scope>INTERACTION WITH UPK3B</scope>
    <source>
        <tissue>Urinary bladder urothelium</tissue>
    </source>
</reference>
<reference key="4">
    <citation type="journal article" date="2002" name="Mol. Biol. Cell">
        <title>Specific heterodimer formation is a prerequisite for uroplakins to exit from the endoplasmic reticulum.</title>
        <authorList>
            <person name="Tu L."/>
            <person name="Sun T.-T."/>
            <person name="Kreibich G."/>
        </authorList>
    </citation>
    <scope>INTERACTION WITH UPK3A</scope>
</reference>